<feature type="signal peptide">
    <location>
        <begin position="1"/>
        <end position="21"/>
    </location>
</feature>
<feature type="chain" id="PRO_0000025244" description="Outer membrane porin PhoE">
    <location>
        <begin position="22"/>
        <end position="349"/>
    </location>
</feature>
<proteinExistence type="evidence at transcript level"/>
<organism>
    <name type="scientific">Klebsiella oxytoca</name>
    <dbReference type="NCBI Taxonomy" id="571"/>
    <lineage>
        <taxon>Bacteria</taxon>
        <taxon>Pseudomonadati</taxon>
        <taxon>Pseudomonadota</taxon>
        <taxon>Gammaproteobacteria</taxon>
        <taxon>Enterobacterales</taxon>
        <taxon>Enterobacteriaceae</taxon>
        <taxon>Klebsiella/Raoultella group</taxon>
        <taxon>Klebsiella</taxon>
    </lineage>
</organism>
<reference key="1">
    <citation type="journal article" date="1992" name="FEMS Microbiol. Lett.">
        <title>Characterization of the Citrobacter freundii phoE gene and development of C. freundii-specific oligonucleotides.</title>
        <authorList>
            <person name="Spierings G."/>
            <person name="Ockhuijsen C."/>
            <person name="Hofstra H."/>
            <person name="Tommassen J."/>
        </authorList>
    </citation>
    <scope>NUCLEOTIDE SEQUENCE [GENOMIC DNA]</scope>
    <source>
        <strain>K26</strain>
    </source>
</reference>
<evidence type="ECO:0000305" key="1"/>
<keyword id="KW-0998">Cell outer membrane</keyword>
<keyword id="KW-0406">Ion transport</keyword>
<keyword id="KW-0472">Membrane</keyword>
<keyword id="KW-0626">Porin</keyword>
<keyword id="KW-0732">Signal</keyword>
<keyword id="KW-0346">Stress response</keyword>
<keyword id="KW-0812">Transmembrane</keyword>
<keyword id="KW-1134">Transmembrane beta strand</keyword>
<keyword id="KW-0813">Transport</keyword>
<name>PHOE_KLEOX</name>
<protein>
    <recommendedName>
        <fullName>Outer membrane porin PhoE</fullName>
    </recommendedName>
    <alternativeName>
        <fullName>Outer membrane pore protein E</fullName>
    </alternativeName>
</protein>
<gene>
    <name type="primary">phoE</name>
</gene>
<sequence length="349" mass="38551">MKKSSLALMMMGLIASSATQAAEVYNKNGNKLDVYGKVKAMHYMSDYDSKDGDQTYVRFGIKGETQINDDLTGYGRWESEFSGNKTESDSSQKTRLAFAGVKVKNYGSFDYGRNLGALYDVEAWTDMFPEFGGDSSAQTDNFMTKRASGLATYRNTDFFGVVDGLDLTLQYQGKNEGREAKKQNGDGFGTSLSYDFGGSDFAVSAAYTSSDRTNDQNLLARGAKKAEAWATGLKYDANNIYLATMYSETRKMTPISGGFANKAQNFEAVAQYQFDFGLRPSLGYVLSKGKDIEGVGSEDLVNYIDVGVTYYFNKNMNAFVDYKINQLKSDNKLGINDDDIVAVGMTYQF</sequence>
<accession>Q01606</accession>
<dbReference type="EMBL" id="X68022">
    <property type="protein sequence ID" value="CAA48163.1"/>
    <property type="molecule type" value="Genomic_DNA"/>
</dbReference>
<dbReference type="SMR" id="Q01606"/>
<dbReference type="STRING" id="571.AB185_30195"/>
<dbReference type="eggNOG" id="COG3203">
    <property type="taxonomic scope" value="Bacteria"/>
</dbReference>
<dbReference type="GO" id="GO:0009279">
    <property type="term" value="C:cell outer membrane"/>
    <property type="evidence" value="ECO:0007669"/>
    <property type="project" value="UniProtKB-SubCell"/>
</dbReference>
<dbReference type="GO" id="GO:0046930">
    <property type="term" value="C:pore complex"/>
    <property type="evidence" value="ECO:0007669"/>
    <property type="project" value="UniProtKB-KW"/>
</dbReference>
<dbReference type="GO" id="GO:0015288">
    <property type="term" value="F:porin activity"/>
    <property type="evidence" value="ECO:0007669"/>
    <property type="project" value="UniProtKB-KW"/>
</dbReference>
<dbReference type="GO" id="GO:0034220">
    <property type="term" value="P:monoatomic ion transmembrane transport"/>
    <property type="evidence" value="ECO:0007669"/>
    <property type="project" value="InterPro"/>
</dbReference>
<dbReference type="CDD" id="cd00342">
    <property type="entry name" value="gram_neg_porins"/>
    <property type="match status" value="1"/>
</dbReference>
<dbReference type="FunFam" id="2.40.160.10:FF:000002">
    <property type="entry name" value="Outer membrane porin F"/>
    <property type="match status" value="1"/>
</dbReference>
<dbReference type="Gene3D" id="2.40.160.10">
    <property type="entry name" value="Porin"/>
    <property type="match status" value="1"/>
</dbReference>
<dbReference type="InterPro" id="IPR050298">
    <property type="entry name" value="Gram-neg_bact_OMP"/>
</dbReference>
<dbReference type="InterPro" id="IPR033900">
    <property type="entry name" value="Gram_neg_porin_domain"/>
</dbReference>
<dbReference type="InterPro" id="IPR023614">
    <property type="entry name" value="Porin_dom_sf"/>
</dbReference>
<dbReference type="InterPro" id="IPR001897">
    <property type="entry name" value="Porin_gammaproteobac"/>
</dbReference>
<dbReference type="InterPro" id="IPR001702">
    <property type="entry name" value="Porin_Gram-ve"/>
</dbReference>
<dbReference type="InterPro" id="IPR013793">
    <property type="entry name" value="Porin_Gram-ve_CS"/>
</dbReference>
<dbReference type="NCBIfam" id="NF007544">
    <property type="entry name" value="PRK10159.1"/>
    <property type="match status" value="1"/>
</dbReference>
<dbReference type="PANTHER" id="PTHR34501:SF5">
    <property type="entry name" value="OUTER MEMBRANE PORIN PHOE"/>
    <property type="match status" value="1"/>
</dbReference>
<dbReference type="PANTHER" id="PTHR34501">
    <property type="entry name" value="PROTEIN YDDL-RELATED"/>
    <property type="match status" value="1"/>
</dbReference>
<dbReference type="Pfam" id="PF00267">
    <property type="entry name" value="Porin_1"/>
    <property type="match status" value="1"/>
</dbReference>
<dbReference type="PRINTS" id="PR00183">
    <property type="entry name" value="ECOLIPORIN"/>
</dbReference>
<dbReference type="PRINTS" id="PR00182">
    <property type="entry name" value="ECOLNEIPORIN"/>
</dbReference>
<dbReference type="SUPFAM" id="SSF56935">
    <property type="entry name" value="Porins"/>
    <property type="match status" value="1"/>
</dbReference>
<dbReference type="PROSITE" id="PS00576">
    <property type="entry name" value="GRAM_NEG_PORIN"/>
    <property type="match status" value="1"/>
</dbReference>
<comment type="function">
    <text>Uptake of inorganic phosphate, phosphorylated compounds, and some other negatively charged solutes.</text>
</comment>
<comment type="subunit">
    <text>Homotrimer.</text>
</comment>
<comment type="subcellular location">
    <subcellularLocation>
        <location>Cell outer membrane</location>
        <topology>Multi-pass membrane protein</topology>
    </subcellularLocation>
</comment>
<comment type="induction">
    <text>By phosphate starvation.</text>
</comment>
<comment type="similarity">
    <text evidence="1">Belongs to the Gram-negative porin family.</text>
</comment>